<organism>
    <name type="scientific">Streptomyces netropsis</name>
    <name type="common">Streptoverticillium netropsis</name>
    <dbReference type="NCBI Taxonomy" id="55404"/>
    <lineage>
        <taxon>Bacteria</taxon>
        <taxon>Bacillati</taxon>
        <taxon>Actinomycetota</taxon>
        <taxon>Actinomycetes</taxon>
        <taxon>Kitasatosporales</taxon>
        <taxon>Streptomycetaceae</taxon>
        <taxon>Streptomyces</taxon>
    </lineage>
</organism>
<comment type="subunit">
    <text evidence="1">Homodimer.</text>
</comment>
<comment type="subcellular location">
    <subcellularLocation>
        <location evidence="1">Secreted</location>
    </subcellularLocation>
</comment>
<comment type="similarity">
    <text evidence="2">Belongs to the protease inhibitor I16 (SSI) family.</text>
</comment>
<dbReference type="SMR" id="P80596"/>
<dbReference type="MEROPS" id="I16.016"/>
<dbReference type="GO" id="GO:0005576">
    <property type="term" value="C:extracellular region"/>
    <property type="evidence" value="ECO:0007669"/>
    <property type="project" value="UniProtKB-SubCell"/>
</dbReference>
<dbReference type="GO" id="GO:0004867">
    <property type="term" value="F:serine-type endopeptidase inhibitor activity"/>
    <property type="evidence" value="ECO:0007669"/>
    <property type="project" value="UniProtKB-UniRule"/>
</dbReference>
<dbReference type="Gene3D" id="3.30.350.10">
    <property type="entry name" value="Subtilisin inhibitor-like"/>
    <property type="match status" value="1"/>
</dbReference>
<dbReference type="HAMAP" id="MF_00778">
    <property type="entry name" value="SSI"/>
    <property type="match status" value="1"/>
</dbReference>
<dbReference type="InterPro" id="IPR000691">
    <property type="entry name" value="Prot_inh_I16_SSI"/>
</dbReference>
<dbReference type="InterPro" id="IPR020054">
    <property type="entry name" value="Prot_inh_SSI_I16_CS"/>
</dbReference>
<dbReference type="InterPro" id="IPR023549">
    <property type="entry name" value="Subtilisin_inhibitor"/>
</dbReference>
<dbReference type="InterPro" id="IPR036819">
    <property type="entry name" value="Subtilisin_inhibitor-like_sf"/>
</dbReference>
<dbReference type="Pfam" id="PF00720">
    <property type="entry name" value="SSI"/>
    <property type="match status" value="1"/>
</dbReference>
<dbReference type="PRINTS" id="PR00294">
    <property type="entry name" value="SSBTLNINHBTR"/>
</dbReference>
<dbReference type="SUPFAM" id="SSF55399">
    <property type="entry name" value="Subtilisin inhibitor"/>
    <property type="match status" value="1"/>
</dbReference>
<dbReference type="PROSITE" id="PS00999">
    <property type="entry name" value="SSI"/>
    <property type="match status" value="1"/>
</dbReference>
<accession>P80596</accession>
<accession>P80599</accession>
<sequence length="110" mass="11645">SLFAPSALVLTVGEGESAADSGVQRAVTLTCTPKASGTHPAARAACDQLRAVDGDFKALVTTKSDRVCTKEYRPIVITAEGVWDGHRVSYEHKFANPCMASDGKGVVFEF</sequence>
<protein>
    <recommendedName>
        <fullName>Protease inhibitor SIL-V1/SIL-V4</fullName>
    </recommendedName>
</protein>
<reference key="1">
    <citation type="journal article" date="1997" name="J. Mol. Evol.">
        <title>Molecular phylogenetic characterization of Streptomyces protease inhibitor family.</title>
        <authorList>
            <person name="Taguchi S."/>
            <person name="Kojima S."/>
            <person name="Terabe M."/>
            <person name="Kumazawa Y."/>
            <person name="Kohriyama H."/>
            <person name="Suzuki M."/>
            <person name="Miura K."/>
            <person name="Momose H."/>
        </authorList>
    </citation>
    <scope>PROTEIN SEQUENCE</scope>
    <source>
        <strain>ATCC 23940 / DSM 40259 / JCM 4655 / NBRC 12893 / NRRL B-2268 / ISP 5259</strain>
        <strain>ISP 5093</strain>
    </source>
</reference>
<keyword id="KW-0903">Direct protein sequencing</keyword>
<keyword id="KW-1015">Disulfide bond</keyword>
<keyword id="KW-0646">Protease inhibitor</keyword>
<keyword id="KW-0964">Secreted</keyword>
<keyword id="KW-0722">Serine protease inhibitor</keyword>
<evidence type="ECO:0000250" key="1"/>
<evidence type="ECO:0000305" key="2"/>
<proteinExistence type="evidence at protein level"/>
<feature type="chain" id="PRO_0000208667" description="Protease inhibitor SIL-V1/SIL-V4">
    <location>
        <begin position="1"/>
        <end position="110"/>
    </location>
</feature>
<feature type="site" description="Reactive bond" evidence="1">
    <location>
        <begin position="70"/>
        <end position="71"/>
    </location>
</feature>
<feature type="disulfide bond" evidence="1">
    <location>
        <begin position="31"/>
        <end position="46"/>
    </location>
</feature>
<feature type="disulfide bond" evidence="1">
    <location>
        <begin position="68"/>
        <end position="98"/>
    </location>
</feature>
<name>SSI_STRNE</name>